<name>OXGR1_RAT</name>
<reference key="1">
    <citation type="journal article" date="2004" name="J. Biol. Chem.">
        <title>Identification and characterization of a cell-surface receptor, P2Y15, for AMP and adenosine.</title>
        <authorList>
            <person name="Inbe H."/>
            <person name="Watanabe S."/>
            <person name="Miyawaki M."/>
            <person name="Tanabe E."/>
            <person name="Encinas J.A."/>
        </authorList>
    </citation>
    <scope>NUCLEOTIDE SEQUENCE [MRNA]</scope>
    <scope>TISSUE SPECIFICITY</scope>
    <source>
        <strain>Sprague-Dawley</strain>
    </source>
</reference>
<proteinExistence type="evidence at transcript level"/>
<keyword id="KW-1003">Cell membrane</keyword>
<keyword id="KW-1015">Disulfide bond</keyword>
<keyword id="KW-0297">G-protein coupled receptor</keyword>
<keyword id="KW-0325">Glycoprotein</keyword>
<keyword id="KW-0391">Immunity</keyword>
<keyword id="KW-0399">Innate immunity</keyword>
<keyword id="KW-0472">Membrane</keyword>
<keyword id="KW-0675">Receptor</keyword>
<keyword id="KW-1185">Reference proteome</keyword>
<keyword id="KW-0807">Transducer</keyword>
<keyword id="KW-0812">Transmembrane</keyword>
<keyword id="KW-1133">Transmembrane helix</keyword>
<sequence>MIETLDSPANDSDFLDYITALENCTDEQISFKMQYLPVIYSIIFLVGFPGNTVAISIYVFKMRPWKSSTIIMLNLALTDLLYLTSLPFLIHYYASGENWIFGDFMCKFIRFGFHFNLYSSILFLTCFSLFRYIVIIHPMSCFSIQKTRWAVVACAGVWVISLVAVMPMTFLITSTTRTNRSACLDLTSSDDLTTIKWYNLILTATTFCLPLLIVTLCYTTIISTLTHGPRTHSCFKQKARRLTILLLLVFYVCFLPFHILRVIRIESRLLSISCSIESHIHEAYIVSRPLAALNTFGNLLLYVVVSNNFQQAFCSAVRCKAIGDLEQAKKDSCSNNP</sequence>
<accession>Q6Y1R5</accession>
<feature type="chain" id="PRO_0000069996" description="2-oxoglutarate receptor 1">
    <location>
        <begin position="1"/>
        <end position="337"/>
    </location>
</feature>
<feature type="topological domain" description="Extracellular" evidence="3">
    <location>
        <begin position="1"/>
        <end position="37"/>
    </location>
</feature>
<feature type="transmembrane region" description="Helical; Name=1" evidence="3">
    <location>
        <begin position="38"/>
        <end position="58"/>
    </location>
</feature>
<feature type="topological domain" description="Cytoplasmic" evidence="3">
    <location>
        <begin position="59"/>
        <end position="69"/>
    </location>
</feature>
<feature type="transmembrane region" description="Helical; Name=2" evidence="3">
    <location>
        <begin position="70"/>
        <end position="90"/>
    </location>
</feature>
<feature type="topological domain" description="Extracellular" evidence="3">
    <location>
        <begin position="91"/>
        <end position="116"/>
    </location>
</feature>
<feature type="transmembrane region" description="Helical; Name=3" evidence="3">
    <location>
        <begin position="117"/>
        <end position="137"/>
    </location>
</feature>
<feature type="topological domain" description="Cytoplasmic" evidence="3">
    <location>
        <begin position="138"/>
        <end position="151"/>
    </location>
</feature>
<feature type="transmembrane region" description="Helical; Name=4" evidence="3">
    <location>
        <begin position="152"/>
        <end position="172"/>
    </location>
</feature>
<feature type="topological domain" description="Extracellular" evidence="3">
    <location>
        <begin position="173"/>
        <end position="200"/>
    </location>
</feature>
<feature type="transmembrane region" description="Helical; Name=5" evidence="3">
    <location>
        <begin position="201"/>
        <end position="221"/>
    </location>
</feature>
<feature type="topological domain" description="Cytoplasmic" evidence="3">
    <location>
        <begin position="222"/>
        <end position="242"/>
    </location>
</feature>
<feature type="transmembrane region" description="Helical; Name=6" evidence="3">
    <location>
        <begin position="243"/>
        <end position="263"/>
    </location>
</feature>
<feature type="topological domain" description="Extracellular" evidence="3">
    <location>
        <begin position="264"/>
        <end position="284"/>
    </location>
</feature>
<feature type="transmembrane region" description="Helical; Name=7" evidence="3">
    <location>
        <begin position="285"/>
        <end position="305"/>
    </location>
</feature>
<feature type="topological domain" description="Cytoplasmic" evidence="3">
    <location>
        <begin position="306"/>
        <end position="337"/>
    </location>
</feature>
<feature type="glycosylation site" description="N-linked (GlcNAc...) asparagine" evidence="3">
    <location>
        <position position="23"/>
    </location>
</feature>
<feature type="disulfide bond" evidence="4">
    <location>
        <begin position="106"/>
        <end position="183"/>
    </location>
</feature>
<organism>
    <name type="scientific">Rattus norvegicus</name>
    <name type="common">Rat</name>
    <dbReference type="NCBI Taxonomy" id="10116"/>
    <lineage>
        <taxon>Eukaryota</taxon>
        <taxon>Metazoa</taxon>
        <taxon>Chordata</taxon>
        <taxon>Craniata</taxon>
        <taxon>Vertebrata</taxon>
        <taxon>Euteleostomi</taxon>
        <taxon>Mammalia</taxon>
        <taxon>Eutheria</taxon>
        <taxon>Euarchontoglires</taxon>
        <taxon>Glires</taxon>
        <taxon>Rodentia</taxon>
        <taxon>Myomorpha</taxon>
        <taxon>Muroidea</taxon>
        <taxon>Muridae</taxon>
        <taxon>Murinae</taxon>
        <taxon>Rattus</taxon>
    </lineage>
</organism>
<evidence type="ECO:0000250" key="1">
    <source>
        <dbReference type="UniProtKB" id="Q6IYF8"/>
    </source>
</evidence>
<evidence type="ECO:0000250" key="2">
    <source>
        <dbReference type="UniProtKB" id="Q96P68"/>
    </source>
</evidence>
<evidence type="ECO:0000255" key="3"/>
<evidence type="ECO:0000255" key="4">
    <source>
        <dbReference type="PROSITE-ProRule" id="PRU00521"/>
    </source>
</evidence>
<evidence type="ECO:0000269" key="5">
    <source>
    </source>
</evidence>
<evidence type="ECO:0000305" key="6">
    <source>
    </source>
</evidence>
<protein>
    <recommendedName>
        <fullName>2-oxoglutarate receptor 1</fullName>
    </recommendedName>
    <alternativeName>
        <fullName>Alpha-ketoglutarate receptor 1</fullName>
    </alternativeName>
    <alternativeName>
        <fullName>G-protein coupled receptor 80</fullName>
    </alternativeName>
    <alternativeName>
        <fullName>P2Y purinoceptor 15</fullName>
        <shortName>P2Y15</shortName>
    </alternativeName>
</protein>
<dbReference type="EMBL" id="AY191367">
    <property type="protein sequence ID" value="AAP32736.1"/>
    <property type="molecule type" value="mRNA"/>
</dbReference>
<dbReference type="RefSeq" id="NP_997471.1">
    <property type="nucleotide sequence ID" value="NM_207588.1"/>
</dbReference>
<dbReference type="RefSeq" id="XP_006252533.1">
    <property type="nucleotide sequence ID" value="XM_006252471.3"/>
</dbReference>
<dbReference type="RefSeq" id="XP_063130245.1">
    <property type="nucleotide sequence ID" value="XM_063274175.1"/>
</dbReference>
<dbReference type="SMR" id="Q6Y1R5"/>
<dbReference type="FunCoup" id="Q6Y1R5">
    <property type="interactions" value="161"/>
</dbReference>
<dbReference type="STRING" id="10116.ENSRNOP00000054374"/>
<dbReference type="BindingDB" id="Q6Y1R5"/>
<dbReference type="ChEMBL" id="CHEMBL2325"/>
<dbReference type="GlyCosmos" id="Q6Y1R5">
    <property type="glycosylation" value="1 site, No reported glycans"/>
</dbReference>
<dbReference type="GlyGen" id="Q6Y1R5">
    <property type="glycosylation" value="1 site"/>
</dbReference>
<dbReference type="PhosphoSitePlus" id="Q6Y1R5"/>
<dbReference type="PaxDb" id="10116-ENSRNOP00000054374"/>
<dbReference type="Ensembl" id="ENSRNOT00000057564.2">
    <property type="protein sequence ID" value="ENSRNOP00000054374.1"/>
    <property type="gene ID" value="ENSRNOG00000037884.2"/>
</dbReference>
<dbReference type="GeneID" id="290493"/>
<dbReference type="KEGG" id="rno:290493"/>
<dbReference type="AGR" id="RGD:1303155"/>
<dbReference type="CTD" id="27199"/>
<dbReference type="RGD" id="1303155">
    <property type="gene designation" value="Oxgr1"/>
</dbReference>
<dbReference type="eggNOG" id="ENOG502QYYG">
    <property type="taxonomic scope" value="Eukaryota"/>
</dbReference>
<dbReference type="GeneTree" id="ENSGT01030000234621"/>
<dbReference type="HOGENOM" id="CLU_009579_8_2_1"/>
<dbReference type="InParanoid" id="Q6Y1R5"/>
<dbReference type="OMA" id="FVIIHPM"/>
<dbReference type="OrthoDB" id="5967390at2759"/>
<dbReference type="PhylomeDB" id="Q6Y1R5"/>
<dbReference type="TreeFam" id="TF330775"/>
<dbReference type="Reactome" id="R-RNO-373076">
    <property type="pathway name" value="Class A/1 (Rhodopsin-like receptors)"/>
</dbReference>
<dbReference type="Reactome" id="R-RNO-418594">
    <property type="pathway name" value="G alpha (i) signalling events"/>
</dbReference>
<dbReference type="PRO" id="PR:Q6Y1R5"/>
<dbReference type="Proteomes" id="UP000002494">
    <property type="component" value="Chromosome 15"/>
</dbReference>
<dbReference type="Bgee" id="ENSRNOG00000037884">
    <property type="expression patterns" value="Expressed in kidney and 1 other cell type or tissue"/>
</dbReference>
<dbReference type="GO" id="GO:0005886">
    <property type="term" value="C:plasma membrane"/>
    <property type="evidence" value="ECO:0000250"/>
    <property type="project" value="UniProtKB"/>
</dbReference>
<dbReference type="GO" id="GO:0004930">
    <property type="term" value="F:G protein-coupled receptor activity"/>
    <property type="evidence" value="ECO:0000250"/>
    <property type="project" value="UniProtKB"/>
</dbReference>
<dbReference type="GO" id="GO:0038023">
    <property type="term" value="F:signaling receptor activity"/>
    <property type="evidence" value="ECO:0000318"/>
    <property type="project" value="GO_Central"/>
</dbReference>
<dbReference type="GO" id="GO:0007186">
    <property type="term" value="P:G protein-coupled receptor signaling pathway"/>
    <property type="evidence" value="ECO:0000318"/>
    <property type="project" value="GO_Central"/>
</dbReference>
<dbReference type="GO" id="GO:0007200">
    <property type="term" value="P:phospholipase C-activating G protein-coupled receptor signaling pathway"/>
    <property type="evidence" value="ECO:0007669"/>
    <property type="project" value="Ensembl"/>
</dbReference>
<dbReference type="CDD" id="cd15375">
    <property type="entry name" value="7tmA_OXGR1"/>
    <property type="match status" value="1"/>
</dbReference>
<dbReference type="FunFam" id="1.20.1070.10:FF:000293">
    <property type="entry name" value="2-oxoglutarate receptor 1"/>
    <property type="match status" value="1"/>
</dbReference>
<dbReference type="Gene3D" id="1.20.1070.10">
    <property type="entry name" value="Rhodopsin 7-helix transmembrane proteins"/>
    <property type="match status" value="1"/>
</dbReference>
<dbReference type="InterPro" id="IPR000276">
    <property type="entry name" value="GPCR_Rhodpsn"/>
</dbReference>
<dbReference type="InterPro" id="IPR017452">
    <property type="entry name" value="GPCR_Rhodpsn_7TM"/>
</dbReference>
<dbReference type="PANTHER" id="PTHR24231:SF15">
    <property type="entry name" value="2-OXOGLUTARATE RECEPTOR 1"/>
    <property type="match status" value="1"/>
</dbReference>
<dbReference type="PANTHER" id="PTHR24231">
    <property type="entry name" value="PURINOCEPTOR-RELATED G-PROTEIN COUPLED RECEPTOR"/>
    <property type="match status" value="1"/>
</dbReference>
<dbReference type="Pfam" id="PF00001">
    <property type="entry name" value="7tm_1"/>
    <property type="match status" value="1"/>
</dbReference>
<dbReference type="PRINTS" id="PR00237">
    <property type="entry name" value="GPCRRHODOPSN"/>
</dbReference>
<dbReference type="PRINTS" id="PR01157">
    <property type="entry name" value="P2YPURNOCPTR"/>
</dbReference>
<dbReference type="SUPFAM" id="SSF81321">
    <property type="entry name" value="Family A G protein-coupled receptor-like"/>
    <property type="match status" value="1"/>
</dbReference>
<dbReference type="PROSITE" id="PS50262">
    <property type="entry name" value="G_PROTEIN_RECEP_F1_2"/>
    <property type="match status" value="1"/>
</dbReference>
<gene>
    <name type="primary">Oxgr1</name>
    <name type="synonym">Gpr80</name>
    <name type="synonym">P2y15</name>
</gene>
<comment type="function">
    <text evidence="1 2">G protein-coupled receptor for dicarboxylates and amino dicarboxylates. Receptor for itaconate, a metabolite produced by myeloid lineages. In the respiratory epithelium, couples the binding of itaconate to the activation of GNA11 and downstream intracellular Ca(2+) release, leading to mucocilliary clearance of airborne pathogens (By similarity). Receptor for leukotriene E4 (LTE4) produced by mast cells upon allergic inflammation. Binds with high affinity to LTE4 and elicits mucin release from pulmonary epithelium in response to airborne fungi allergens. Regulates mucin-producing goblet cell homeostasis (By similarity). Receptor for alpha-ketoglutarate produced by proximal tubule renal cells upon metabolic alkalosis. In an intrarenal paracrine signaling pathway, binds alpha-ketoglutarate and drives transepithelial salt reabsorption and bicarbonate secretion by SLC26A4/pendrin-positive intercalated cells (By similarity).</text>
</comment>
<comment type="subcellular location">
    <subcellularLocation>
        <location evidence="2">Cell membrane</location>
        <topology evidence="3">Multi-pass membrane protein</topology>
    </subcellularLocation>
    <text evidence="2">Upon itaconate binding, internalizes via endocytosis in a beta-arrestin dependent manner.</text>
</comment>
<comment type="tissue specificity">
    <text evidence="5">Highly expressed in mast cells and is found predominantly in the tissues of the respiratory tract and kidneys.</text>
</comment>
<comment type="similarity">
    <text evidence="4">Belongs to the G-protein coupled receptor 1 family.</text>
</comment>
<comment type="caution">
    <text evidence="6">Was originally thought to be a P2Y receptor.</text>
</comment>